<organism>
    <name type="scientific">Clostridium acetobutylicum (strain ATCC 824 / DSM 792 / JCM 1419 / IAM 19013 / LMG 5710 / NBRC 13948 / NRRL B-527 / VKM B-1787 / 2291 / W)</name>
    <dbReference type="NCBI Taxonomy" id="272562"/>
    <lineage>
        <taxon>Bacteria</taxon>
        <taxon>Bacillati</taxon>
        <taxon>Bacillota</taxon>
        <taxon>Clostridia</taxon>
        <taxon>Eubacteriales</taxon>
        <taxon>Clostridiaceae</taxon>
        <taxon>Clostridium</taxon>
    </lineage>
</organism>
<dbReference type="EC" id="2.7.1.11" evidence="1"/>
<dbReference type="EMBL" id="U52366">
    <property type="protein sequence ID" value="AAB50189.1"/>
    <property type="molecule type" value="Genomic_DNA"/>
</dbReference>
<dbReference type="EMBL" id="AE001437">
    <property type="protein sequence ID" value="AAK78497.1"/>
    <property type="molecule type" value="Genomic_DNA"/>
</dbReference>
<dbReference type="PIR" id="F96963">
    <property type="entry name" value="F96963"/>
</dbReference>
<dbReference type="RefSeq" id="NP_347157.1">
    <property type="nucleotide sequence ID" value="NC_003030.1"/>
</dbReference>
<dbReference type="RefSeq" id="WP_010963839.1">
    <property type="nucleotide sequence ID" value="NC_003030.1"/>
</dbReference>
<dbReference type="SMR" id="O08308"/>
<dbReference type="STRING" id="272562.CA_C0517"/>
<dbReference type="GeneID" id="44997026"/>
<dbReference type="KEGG" id="cac:CA_C0517"/>
<dbReference type="PATRIC" id="fig|272562.8.peg.716"/>
<dbReference type="eggNOG" id="COG0205">
    <property type="taxonomic scope" value="Bacteria"/>
</dbReference>
<dbReference type="HOGENOM" id="CLU_020655_0_1_9"/>
<dbReference type="OrthoDB" id="9802503at2"/>
<dbReference type="BRENDA" id="2.7.1.11">
    <property type="organism ID" value="1452"/>
</dbReference>
<dbReference type="UniPathway" id="UPA00109">
    <property type="reaction ID" value="UER00182"/>
</dbReference>
<dbReference type="Proteomes" id="UP000000814">
    <property type="component" value="Chromosome"/>
</dbReference>
<dbReference type="GO" id="GO:0005945">
    <property type="term" value="C:6-phosphofructokinase complex"/>
    <property type="evidence" value="ECO:0007669"/>
    <property type="project" value="TreeGrafter"/>
</dbReference>
<dbReference type="GO" id="GO:0003872">
    <property type="term" value="F:6-phosphofructokinase activity"/>
    <property type="evidence" value="ECO:0007669"/>
    <property type="project" value="UniProtKB-UniRule"/>
</dbReference>
<dbReference type="GO" id="GO:0016208">
    <property type="term" value="F:AMP binding"/>
    <property type="evidence" value="ECO:0007669"/>
    <property type="project" value="TreeGrafter"/>
</dbReference>
<dbReference type="GO" id="GO:0005524">
    <property type="term" value="F:ATP binding"/>
    <property type="evidence" value="ECO:0007669"/>
    <property type="project" value="UniProtKB-KW"/>
</dbReference>
<dbReference type="GO" id="GO:0070095">
    <property type="term" value="F:fructose-6-phosphate binding"/>
    <property type="evidence" value="ECO:0007669"/>
    <property type="project" value="TreeGrafter"/>
</dbReference>
<dbReference type="GO" id="GO:0042802">
    <property type="term" value="F:identical protein binding"/>
    <property type="evidence" value="ECO:0007669"/>
    <property type="project" value="TreeGrafter"/>
</dbReference>
<dbReference type="GO" id="GO:0046872">
    <property type="term" value="F:metal ion binding"/>
    <property type="evidence" value="ECO:0007669"/>
    <property type="project" value="UniProtKB-KW"/>
</dbReference>
<dbReference type="GO" id="GO:0048029">
    <property type="term" value="F:monosaccharide binding"/>
    <property type="evidence" value="ECO:0007669"/>
    <property type="project" value="TreeGrafter"/>
</dbReference>
<dbReference type="GO" id="GO:0061621">
    <property type="term" value="P:canonical glycolysis"/>
    <property type="evidence" value="ECO:0007669"/>
    <property type="project" value="TreeGrafter"/>
</dbReference>
<dbReference type="GO" id="GO:0030388">
    <property type="term" value="P:fructose 1,6-bisphosphate metabolic process"/>
    <property type="evidence" value="ECO:0007669"/>
    <property type="project" value="TreeGrafter"/>
</dbReference>
<dbReference type="GO" id="GO:0006002">
    <property type="term" value="P:fructose 6-phosphate metabolic process"/>
    <property type="evidence" value="ECO:0007669"/>
    <property type="project" value="InterPro"/>
</dbReference>
<dbReference type="FunFam" id="3.40.50.450:FF:000001">
    <property type="entry name" value="ATP-dependent 6-phosphofructokinase"/>
    <property type="match status" value="1"/>
</dbReference>
<dbReference type="FunFam" id="3.40.50.460:FF:000002">
    <property type="entry name" value="ATP-dependent 6-phosphofructokinase"/>
    <property type="match status" value="1"/>
</dbReference>
<dbReference type="Gene3D" id="3.40.50.450">
    <property type="match status" value="1"/>
</dbReference>
<dbReference type="Gene3D" id="3.40.50.460">
    <property type="entry name" value="Phosphofructokinase domain"/>
    <property type="match status" value="1"/>
</dbReference>
<dbReference type="HAMAP" id="MF_00339">
    <property type="entry name" value="Phosphofructokinase_I_B1"/>
    <property type="match status" value="1"/>
</dbReference>
<dbReference type="InterPro" id="IPR022953">
    <property type="entry name" value="ATP_PFK"/>
</dbReference>
<dbReference type="InterPro" id="IPR012003">
    <property type="entry name" value="ATP_PFK_prok-type"/>
</dbReference>
<dbReference type="InterPro" id="IPR012828">
    <property type="entry name" value="PFKA_ATP_prok"/>
</dbReference>
<dbReference type="InterPro" id="IPR015912">
    <property type="entry name" value="Phosphofructokinase_CS"/>
</dbReference>
<dbReference type="InterPro" id="IPR000023">
    <property type="entry name" value="Phosphofructokinase_dom"/>
</dbReference>
<dbReference type="InterPro" id="IPR035966">
    <property type="entry name" value="PKF_sf"/>
</dbReference>
<dbReference type="NCBIfam" id="TIGR02482">
    <property type="entry name" value="PFKA_ATP"/>
    <property type="match status" value="1"/>
</dbReference>
<dbReference type="NCBIfam" id="NF002872">
    <property type="entry name" value="PRK03202.1"/>
    <property type="match status" value="1"/>
</dbReference>
<dbReference type="PANTHER" id="PTHR13697:SF4">
    <property type="entry name" value="ATP-DEPENDENT 6-PHOSPHOFRUCTOKINASE"/>
    <property type="match status" value="1"/>
</dbReference>
<dbReference type="PANTHER" id="PTHR13697">
    <property type="entry name" value="PHOSPHOFRUCTOKINASE"/>
    <property type="match status" value="1"/>
</dbReference>
<dbReference type="Pfam" id="PF00365">
    <property type="entry name" value="PFK"/>
    <property type="match status" value="1"/>
</dbReference>
<dbReference type="PIRSF" id="PIRSF000532">
    <property type="entry name" value="ATP_PFK_prok"/>
    <property type="match status" value="1"/>
</dbReference>
<dbReference type="PRINTS" id="PR00476">
    <property type="entry name" value="PHFRCTKINASE"/>
</dbReference>
<dbReference type="SUPFAM" id="SSF53784">
    <property type="entry name" value="Phosphofructokinase"/>
    <property type="match status" value="1"/>
</dbReference>
<dbReference type="PROSITE" id="PS00433">
    <property type="entry name" value="PHOSPHOFRUCTOKINASE"/>
    <property type="match status" value="1"/>
</dbReference>
<proteinExistence type="inferred from homology"/>
<accession>O08308</accession>
<sequence length="319" mass="34194">MKTIAVLTSGGDAPGMNAAIRAVVRTAIEKGINVKGIQRGYSGLINGEIFDMNRHSVSDIIQRGGTILRTARCPEFLKEEVRQKAANVLRVFGIDGLVVIGGNGSFMGAQKLSKLGVKTVGLPGTIDNDLPYTDYTIGFDTTLNTVLDAINKLRDTSTSHERVSIIEVMGRDCGDIALFSGIAGGAESVIIPEIGYDFNELCKNILEGKLRGKMHNLIILAEGVGGAAELAKKVEEVTGIETRSTILGHIQRGGSPSAFDRMLASRMGVKAVEVLMEGKTSRVIGIKEGKIMDQDIDEALAVPRSFNKELYDIANMLSK</sequence>
<name>PFKA_CLOAB</name>
<gene>
    <name evidence="1" type="primary">pfkA</name>
    <name type="synonym">pfk</name>
    <name type="ordered locus">CA_C0517</name>
</gene>
<feature type="chain" id="PRO_0000111943" description="ATP-dependent 6-phosphofructokinase">
    <location>
        <begin position="1"/>
        <end position="319"/>
    </location>
</feature>
<feature type="active site" description="Proton acceptor" evidence="1">
    <location>
        <position position="127"/>
    </location>
</feature>
<feature type="binding site" evidence="1">
    <location>
        <position position="11"/>
    </location>
    <ligand>
        <name>ATP</name>
        <dbReference type="ChEBI" id="CHEBI:30616"/>
    </ligand>
</feature>
<feature type="binding site" evidence="1">
    <location>
        <begin position="21"/>
        <end position="25"/>
    </location>
    <ligand>
        <name>ADP</name>
        <dbReference type="ChEBI" id="CHEBI:456216"/>
        <note>allosteric activator; ligand shared between dimeric partners</note>
    </ligand>
</feature>
<feature type="binding site" evidence="1">
    <location>
        <begin position="72"/>
        <end position="73"/>
    </location>
    <ligand>
        <name>ATP</name>
        <dbReference type="ChEBI" id="CHEBI:30616"/>
    </ligand>
</feature>
<feature type="binding site" evidence="1">
    <location>
        <begin position="102"/>
        <end position="105"/>
    </location>
    <ligand>
        <name>ATP</name>
        <dbReference type="ChEBI" id="CHEBI:30616"/>
    </ligand>
</feature>
<feature type="binding site" evidence="1">
    <location>
        <position position="103"/>
    </location>
    <ligand>
        <name>Mg(2+)</name>
        <dbReference type="ChEBI" id="CHEBI:18420"/>
        <note>catalytic</note>
    </ligand>
</feature>
<feature type="binding site" description="in other chain" evidence="1">
    <location>
        <begin position="125"/>
        <end position="127"/>
    </location>
    <ligand>
        <name>substrate</name>
        <note>ligand shared between dimeric partners</note>
    </ligand>
</feature>
<feature type="binding site" description="in other chain" evidence="1">
    <location>
        <position position="154"/>
    </location>
    <ligand>
        <name>ADP</name>
        <dbReference type="ChEBI" id="CHEBI:456216"/>
        <note>allosteric activator; ligand shared between dimeric partners</note>
    </ligand>
</feature>
<feature type="binding site" evidence="1">
    <location>
        <position position="162"/>
    </location>
    <ligand>
        <name>substrate</name>
        <note>ligand shared between dimeric partners</note>
    </ligand>
</feature>
<feature type="binding site" description="in other chain" evidence="1">
    <location>
        <begin position="169"/>
        <end position="171"/>
    </location>
    <ligand>
        <name>substrate</name>
        <note>ligand shared between dimeric partners</note>
    </ligand>
</feature>
<feature type="binding site" description="in other chain" evidence="1">
    <location>
        <begin position="185"/>
        <end position="187"/>
    </location>
    <ligand>
        <name>ADP</name>
        <dbReference type="ChEBI" id="CHEBI:456216"/>
        <note>allosteric activator; ligand shared between dimeric partners</note>
    </ligand>
</feature>
<feature type="binding site" description="in other chain" evidence="1">
    <location>
        <position position="211"/>
    </location>
    <ligand>
        <name>ADP</name>
        <dbReference type="ChEBI" id="CHEBI:456216"/>
        <note>allosteric activator; ligand shared between dimeric partners</note>
    </ligand>
</feature>
<feature type="binding site" description="in other chain" evidence="1">
    <location>
        <begin position="213"/>
        <end position="215"/>
    </location>
    <ligand>
        <name>ADP</name>
        <dbReference type="ChEBI" id="CHEBI:456216"/>
        <note>allosteric activator; ligand shared between dimeric partners</note>
    </ligand>
</feature>
<feature type="binding site" description="in other chain" evidence="1">
    <location>
        <position position="222"/>
    </location>
    <ligand>
        <name>substrate</name>
        <note>ligand shared between dimeric partners</note>
    </ligand>
</feature>
<feature type="binding site" evidence="1">
    <location>
        <position position="243"/>
    </location>
    <ligand>
        <name>substrate</name>
        <note>ligand shared between dimeric partners</note>
    </ligand>
</feature>
<feature type="binding site" description="in other chain" evidence="1">
    <location>
        <begin position="249"/>
        <end position="252"/>
    </location>
    <ligand>
        <name>substrate</name>
        <note>ligand shared between dimeric partners</note>
    </ligand>
</feature>
<feature type="sequence conflict" description="In Ref. 1; AAB50189." evidence="2" ref="1">
    <original>R</original>
    <variation>G</variation>
    <location>
        <position position="39"/>
    </location>
</feature>
<protein>
    <recommendedName>
        <fullName evidence="1">ATP-dependent 6-phosphofructokinase</fullName>
        <shortName evidence="1">ATP-PFK</shortName>
        <shortName evidence="1">Phosphofructokinase</shortName>
        <ecNumber evidence="1">2.7.1.11</ecNumber>
    </recommendedName>
    <alternativeName>
        <fullName evidence="1">Phosphohexokinase</fullName>
    </alternativeName>
</protein>
<comment type="function">
    <text evidence="1">Catalyzes the phosphorylation of D-fructose 6-phosphate to fructose 1,6-bisphosphate by ATP, the first committing step of glycolysis.</text>
</comment>
<comment type="catalytic activity">
    <reaction evidence="1">
        <text>beta-D-fructose 6-phosphate + ATP = beta-D-fructose 1,6-bisphosphate + ADP + H(+)</text>
        <dbReference type="Rhea" id="RHEA:16109"/>
        <dbReference type="ChEBI" id="CHEBI:15378"/>
        <dbReference type="ChEBI" id="CHEBI:30616"/>
        <dbReference type="ChEBI" id="CHEBI:32966"/>
        <dbReference type="ChEBI" id="CHEBI:57634"/>
        <dbReference type="ChEBI" id="CHEBI:456216"/>
        <dbReference type="EC" id="2.7.1.11"/>
    </reaction>
</comment>
<comment type="cofactor">
    <cofactor evidence="1">
        <name>Mg(2+)</name>
        <dbReference type="ChEBI" id="CHEBI:18420"/>
    </cofactor>
</comment>
<comment type="activity regulation">
    <text evidence="1">Allosterically activated by ADP and other diphosphonucleosides, and allosterically inhibited by phosphoenolpyruvate.</text>
</comment>
<comment type="pathway">
    <text evidence="1">Carbohydrate degradation; glycolysis; D-glyceraldehyde 3-phosphate and glycerone phosphate from D-glucose: step 3/4.</text>
</comment>
<comment type="subunit">
    <text evidence="1">Homotetramer.</text>
</comment>
<comment type="subcellular location">
    <subcellularLocation>
        <location evidence="1">Cytoplasm</location>
    </subcellularLocation>
</comment>
<comment type="similarity">
    <text evidence="1">Belongs to the phosphofructokinase type A (PFKA) family. ATP-dependent PFK group I subfamily. Prokaryotic clade 'B1' sub-subfamily.</text>
</comment>
<keyword id="KW-0021">Allosteric enzyme</keyword>
<keyword id="KW-0067">ATP-binding</keyword>
<keyword id="KW-0963">Cytoplasm</keyword>
<keyword id="KW-0324">Glycolysis</keyword>
<keyword id="KW-0418">Kinase</keyword>
<keyword id="KW-0460">Magnesium</keyword>
<keyword id="KW-0479">Metal-binding</keyword>
<keyword id="KW-0547">Nucleotide-binding</keyword>
<keyword id="KW-1185">Reference proteome</keyword>
<keyword id="KW-0808">Transferase</keyword>
<evidence type="ECO:0000255" key="1">
    <source>
        <dbReference type="HAMAP-Rule" id="MF_00339"/>
    </source>
</evidence>
<evidence type="ECO:0000305" key="2"/>
<reference key="1">
    <citation type="journal article" date="1998" name="Curr. Microbiol.">
        <title>Cloning, sequence, and expression of the phosphofructokinase gene of Clostridium acetobutylicum ATCC 824 in Escherichia coli.</title>
        <authorList>
            <person name="Belouski E."/>
            <person name="Watson D.E."/>
            <person name="Bennett G.N."/>
        </authorList>
    </citation>
    <scope>NUCLEOTIDE SEQUENCE [GENOMIC DNA]</scope>
    <source>
        <strain>ATCC 824 / DSM 792 / JCM 1419 / IAM 19013 / LMG 5710 / NBRC 13948 / NRRL B-527 / VKM B-1787 / 2291 / W</strain>
    </source>
</reference>
<reference key="2">
    <citation type="journal article" date="2001" name="J. Bacteriol.">
        <title>Genome sequence and comparative analysis of the solvent-producing bacterium Clostridium acetobutylicum.</title>
        <authorList>
            <person name="Noelling J."/>
            <person name="Breton G."/>
            <person name="Omelchenko M.V."/>
            <person name="Makarova K.S."/>
            <person name="Zeng Q."/>
            <person name="Gibson R."/>
            <person name="Lee H.M."/>
            <person name="Dubois J."/>
            <person name="Qiu D."/>
            <person name="Hitti J."/>
            <person name="Wolf Y.I."/>
            <person name="Tatusov R.L."/>
            <person name="Sabathe F."/>
            <person name="Doucette-Stamm L.A."/>
            <person name="Soucaille P."/>
            <person name="Daly M.J."/>
            <person name="Bennett G.N."/>
            <person name="Koonin E.V."/>
            <person name="Smith D.R."/>
        </authorList>
    </citation>
    <scope>NUCLEOTIDE SEQUENCE [LARGE SCALE GENOMIC DNA]</scope>
    <source>
        <strain>ATCC 824 / DSM 792 / JCM 1419 / IAM 19013 / LMG 5710 / NBRC 13948 / NRRL B-527 / VKM B-1787 / 2291 / W</strain>
    </source>
</reference>